<accession>Q8QHI2</accession>
<sequence>FALSWRSYKHTNSQFLYFAPDLIFDEERMRQSAMFELCQGMHQISLQFVRLQLSFEEYTIMKVLLLLSTVPKDGLKSQAAFEEMRANYIKELKKMVTKCPSNSGQSWQRFYQLTKLLDSMHDLVSDLLEFCFYTFRESQALKVEFPA</sequence>
<name>MCR_CHICK</name>
<protein>
    <recommendedName>
        <fullName>Mineralocorticoid receptor</fullName>
        <shortName>MR</shortName>
    </recommendedName>
    <alternativeName>
        <fullName>Nuclear receptor subfamily 3 group C member 2</fullName>
    </alternativeName>
</protein>
<reference key="1">
    <citation type="submission" date="2002-01" db="EMBL/GenBank/DDBJ databases">
        <title>Cloning of a partial cDNA for the chicken mineralocorticoid receptor.</title>
        <authorList>
            <person name="Ghavam S."/>
            <person name="Porter T.E."/>
        </authorList>
    </citation>
    <scope>NUCLEOTIDE SEQUENCE [MRNA]</scope>
</reference>
<organism>
    <name type="scientific">Gallus gallus</name>
    <name type="common">Chicken</name>
    <dbReference type="NCBI Taxonomy" id="9031"/>
    <lineage>
        <taxon>Eukaryota</taxon>
        <taxon>Metazoa</taxon>
        <taxon>Chordata</taxon>
        <taxon>Craniata</taxon>
        <taxon>Vertebrata</taxon>
        <taxon>Euteleostomi</taxon>
        <taxon>Archelosauria</taxon>
        <taxon>Archosauria</taxon>
        <taxon>Dinosauria</taxon>
        <taxon>Saurischia</taxon>
        <taxon>Theropoda</taxon>
        <taxon>Coelurosauria</taxon>
        <taxon>Aves</taxon>
        <taxon>Neognathae</taxon>
        <taxon>Galloanserae</taxon>
        <taxon>Galliformes</taxon>
        <taxon>Phasianidae</taxon>
        <taxon>Phasianinae</taxon>
        <taxon>Gallus</taxon>
    </lineage>
</organism>
<keyword id="KW-0963">Cytoplasm</keyword>
<keyword id="KW-0238">DNA-binding</keyword>
<keyword id="KW-0446">Lipid-binding</keyword>
<keyword id="KW-0539">Nucleus</keyword>
<keyword id="KW-0675">Receptor</keyword>
<keyword id="KW-1185">Reference proteome</keyword>
<keyword id="KW-0754">Steroid-binding</keyword>
<keyword id="KW-0804">Transcription</keyword>
<keyword id="KW-0805">Transcription regulation</keyword>
<gene>
    <name type="primary">NR3C2</name>
    <name type="synonym">MLR</name>
</gene>
<comment type="function">
    <text evidence="1">Receptor for both mineralocorticoids (MC) such as aldosterone and glucocorticoids (GC) such as corticosterone or cortisol. Binds to mineralocorticoid response elements (MRE) and transactivates target genes. The effect of MC is to increase ion and water transport and thus raise extracellular fluid volume and blood pressure and lower potassium levels (By similarity).</text>
</comment>
<comment type="subcellular location">
    <subcellularLocation>
        <location evidence="1">Cytoplasm</location>
    </subcellularLocation>
    <subcellularLocation>
        <location evidence="1">Nucleus</location>
    </subcellularLocation>
    <text evidence="1">Cytoplasmic and nuclear in the absence of ligand, nuclear after ligand-binding.</text>
</comment>
<comment type="domain">
    <text>Composed of three domains: a modulating N-terminal domain, a DNA-binding domain and a C-terminal ligand-binding domain.</text>
</comment>
<comment type="similarity">
    <text evidence="4">Belongs to the nuclear hormone receptor family. NR3 subfamily.</text>
</comment>
<feature type="chain" id="PRO_0000053688" description="Mineralocorticoid receptor">
    <location>
        <begin position="1" status="less than"/>
        <end position="147" status="greater than"/>
    </location>
</feature>
<feature type="domain" description="NR LBD" evidence="3">
    <location>
        <begin position="1" status="less than"/>
        <end position="147" status="greater than"/>
    </location>
</feature>
<feature type="binding site" evidence="2">
    <location>
        <position position="6"/>
    </location>
    <ligand>
        <name>21-hydroxyprogesterone</name>
        <dbReference type="ChEBI" id="CHEBI:16973"/>
    </ligand>
</feature>
<feature type="binding site" evidence="2">
    <location>
        <position position="6"/>
    </location>
    <ligand>
        <name>aldosterone</name>
        <dbReference type="ChEBI" id="CHEBI:27584"/>
    </ligand>
</feature>
<feature type="binding site" evidence="2">
    <location>
        <position position="6"/>
    </location>
    <ligand>
        <name>progesterone</name>
        <dbReference type="ChEBI" id="CHEBI:17026"/>
    </ligand>
</feature>
<feature type="binding site" evidence="2">
    <location>
        <position position="134"/>
    </location>
    <ligand>
        <name>21-hydroxyprogesterone</name>
        <dbReference type="ChEBI" id="CHEBI:16973"/>
    </ligand>
</feature>
<feature type="binding site" evidence="2">
    <location>
        <position position="134"/>
    </location>
    <ligand>
        <name>aldosterone</name>
        <dbReference type="ChEBI" id="CHEBI:27584"/>
    </ligand>
</feature>
<feature type="binding site" evidence="2">
    <location>
        <position position="134"/>
    </location>
    <ligand>
        <name>progesterone</name>
        <dbReference type="ChEBI" id="CHEBI:17026"/>
    </ligand>
</feature>
<feature type="non-terminal residue">
    <location>
        <position position="1"/>
    </location>
</feature>
<feature type="non-terminal residue">
    <location>
        <position position="147"/>
    </location>
</feature>
<proteinExistence type="evidence at transcript level"/>
<evidence type="ECO:0000250" key="1"/>
<evidence type="ECO:0000250" key="2">
    <source>
        <dbReference type="UniProtKB" id="P08235"/>
    </source>
</evidence>
<evidence type="ECO:0000255" key="3">
    <source>
        <dbReference type="PROSITE-ProRule" id="PRU01189"/>
    </source>
</evidence>
<evidence type="ECO:0000305" key="4"/>
<dbReference type="EMBL" id="AF468211">
    <property type="protein sequence ID" value="AAL77075.1"/>
    <property type="molecule type" value="mRNA"/>
</dbReference>
<dbReference type="SMR" id="Q8QHI2"/>
<dbReference type="FunCoup" id="Q8QHI2">
    <property type="interactions" value="304"/>
</dbReference>
<dbReference type="STRING" id="9031.ENSGALP00000058137"/>
<dbReference type="PaxDb" id="9031-ENSGALP00000016283"/>
<dbReference type="VEuPathDB" id="HostDB:geneid_374131"/>
<dbReference type="eggNOG" id="KOG3575">
    <property type="taxonomic scope" value="Eukaryota"/>
</dbReference>
<dbReference type="HOGENOM" id="CLU_012534_0_0_1"/>
<dbReference type="InParanoid" id="Q8QHI2"/>
<dbReference type="OrthoDB" id="10032732at2759"/>
<dbReference type="Proteomes" id="UP000000539">
    <property type="component" value="Unassembled WGS sequence"/>
</dbReference>
<dbReference type="GO" id="GO:0005737">
    <property type="term" value="C:cytoplasm"/>
    <property type="evidence" value="ECO:0007669"/>
    <property type="project" value="UniProtKB-SubCell"/>
</dbReference>
<dbReference type="GO" id="GO:0005634">
    <property type="term" value="C:nucleus"/>
    <property type="evidence" value="ECO:0007669"/>
    <property type="project" value="UniProtKB-SubCell"/>
</dbReference>
<dbReference type="GO" id="GO:0003677">
    <property type="term" value="F:DNA binding"/>
    <property type="evidence" value="ECO:0007669"/>
    <property type="project" value="UniProtKB-KW"/>
</dbReference>
<dbReference type="GO" id="GO:0005496">
    <property type="term" value="F:steroid binding"/>
    <property type="evidence" value="ECO:0007669"/>
    <property type="project" value="UniProtKB-KW"/>
</dbReference>
<dbReference type="Gene3D" id="1.10.565.10">
    <property type="entry name" value="Retinoid X Receptor"/>
    <property type="match status" value="1"/>
</dbReference>
<dbReference type="InterPro" id="IPR035500">
    <property type="entry name" value="NHR-like_dom_sf"/>
</dbReference>
<dbReference type="InterPro" id="IPR000536">
    <property type="entry name" value="Nucl_hrmn_rcpt_lig-bd"/>
</dbReference>
<dbReference type="InterPro" id="IPR050200">
    <property type="entry name" value="Nuclear_hormone_rcpt_NR3"/>
</dbReference>
<dbReference type="PANTHER" id="PTHR48092">
    <property type="entry name" value="KNIRPS-RELATED PROTEIN-RELATED"/>
    <property type="match status" value="1"/>
</dbReference>
<dbReference type="Pfam" id="PF00104">
    <property type="entry name" value="Hormone_recep"/>
    <property type="match status" value="1"/>
</dbReference>
<dbReference type="SUPFAM" id="SSF48508">
    <property type="entry name" value="Nuclear receptor ligand-binding domain"/>
    <property type="match status" value="1"/>
</dbReference>
<dbReference type="PROSITE" id="PS51843">
    <property type="entry name" value="NR_LBD"/>
    <property type="match status" value="1"/>
</dbReference>